<name>ATG5_PONAB</name>
<gene>
    <name evidence="3" type="primary">ATG5</name>
    <name type="synonym">APG5L</name>
</gene>
<comment type="function">
    <text evidence="2 3">Involved in autophagic vesicle formation. Conjugation with ATG12, through a ubiquitin-like conjugating system involving ATG7 as an E1-like activating enzyme and ATG10 as an E2-like conjugating enzyme, is essential for its function. The ATG12-ATG5 conjugate acts as an E3-like enzyme which is required for lipidation of ATG8 family proteins and their association to the vesicle membranes. Involved in mitochondrial quality control after oxidative damage, and in subsequent cellular longevity. Plays a critical role in multiple aspects of lymphocyte development and is essential for both B and T lymphocyte survival and proliferation. Required for optimal processing and presentation of antigens for MHC II. Involved in the maintenance of axon morphology and membrane structures, as well as in normal adipocyte differentiation. Promotes primary ciliogenesis through removal of OFD1 from centriolar satellites and degradation of IFT20 via the autophagic pathway. As part of the ATG8 conjugation system with ATG12 and ATG16L1, required for recruitment of LRRK2 to stressed lysosomes and induction of LRRK2 kinase activity in response to lysosomal stress (By similarity).</text>
</comment>
<comment type="function">
    <text evidence="3">May play an important role in the apoptotic process, possibly within the modified cytoskeleton. Its expression is a relatively late event in the apoptotic process, occurring downstream of caspase activity. Plays a crucial role in IFN-gamma-induced autophagic cell death by interacting with FADD.</text>
</comment>
<comment type="subunit">
    <text evidence="2 3">Forms a conjugate with ATG12. Part of the minor complex composed of 4 sets of ATG12-ATG5 and ATG16L1 (400 kDa); this complex interacts with ATG3 leading to disruption of ATG7 interaction and promotion of ATG8-like proteins lipidation (By similarity). Forms an 800-kDa complex composed of ATG12-ATG5 and ATG16L2 (By similarity). The ATG12-ATG5 conjugate interacts with RAB33A; this interaction is bridged by ATG16L1 and promotes ATG12-ATG5-ATG16L1 complex recruitment to phagophores (By similarity). Interacts with TECPR1; the interaction is direct and does not take place when ATG16L1 is associated with the ATG5-ATG12 conjugate. Interacts with DHX58/RIG-1, IFIH1/MDA5 and MAVS/IPS-1 in monomeric form as well as in ATG12-ATG5 conjugate form. The interaction with MAVS is further enhanced upon vesicular stomatitis virus (VSV) infection. Interacts with ATG3 (By similarity). Interacts with ATG7 and ATG10 (By similarity). Interacts with FADD (By similarity). Interacts with Bassoon/BSN; this interaction is important for the regulation of presynaptic autophagy (By similarity). Interacts with ATG16L2 (By similarity).</text>
</comment>
<comment type="subcellular location">
    <subcellularLocation>
        <location evidence="3">Cytoplasm</location>
    </subcellularLocation>
    <subcellularLocation>
        <location evidence="1">Preautophagosomal structure membrane</location>
        <topology evidence="1">Peripheral membrane protein</topology>
    </subcellularLocation>
    <text evidence="1 3">The conjugate detaches from the membrane immediately before or after autophagosome formation is completed. Under starved conditions, the ATG12-ATG5-ATG16L1 complex is translocated to phagophores driven by RAB33B (By similarity).</text>
</comment>
<comment type="PTM">
    <text evidence="1">Conjugated to ATG12; which is essential for autophagy, but is not required for association with isolation membrane.</text>
</comment>
<comment type="PTM">
    <text evidence="1">Acetylated by EP300.</text>
</comment>
<comment type="similarity">
    <text evidence="4">Belongs to the ATG5 family.</text>
</comment>
<sequence>MTDDKDVLRDVWFGRIPTCFTLCQDEITEREAEPYYLLLPRVSYLTLVTDKVKKHFQKVMRQEDISEIWFEYEGTPLKWHYPIGLLFDLLASSSALPWNITVHFKSFPEKDLLHCPSKDAIEAHFMSCMKEADALKHKSQVINEMQKKDHKQLWMGLQNDRFDQFWAINRKLMEYPAEENGFRYIPFRIYQTTTERPFIQKLFRPVAADGQLHTLGDLLKEVCPSAVDPEDGEKKNQVMIHGIEPMLETPLQWLSEHLSYPDNFLHISIIPQPTD</sequence>
<protein>
    <recommendedName>
        <fullName evidence="3">Autophagy protein 5</fullName>
    </recommendedName>
    <alternativeName>
        <fullName>APG5-like</fullName>
    </alternativeName>
</protein>
<proteinExistence type="evidence at transcript level"/>
<keyword id="KW-0007">Acetylation</keyword>
<keyword id="KW-0053">Apoptosis</keyword>
<keyword id="KW-0072">Autophagy</keyword>
<keyword id="KW-0963">Cytoplasm</keyword>
<keyword id="KW-0391">Immunity</keyword>
<keyword id="KW-1017">Isopeptide bond</keyword>
<keyword id="KW-0472">Membrane</keyword>
<keyword id="KW-1185">Reference proteome</keyword>
<keyword id="KW-0832">Ubl conjugation</keyword>
<feature type="chain" id="PRO_0000218997" description="Autophagy protein 5">
    <location>
        <begin position="1"/>
        <end position="275"/>
    </location>
</feature>
<feature type="modified residue" description="N-acetylmethionine" evidence="3">
    <location>
        <position position="1"/>
    </location>
</feature>
<feature type="cross-link" description="Glycyl lysine isopeptide (Lys-Gly) (interchain with G-Cter in ATG12)" evidence="1">
    <location>
        <position position="130"/>
    </location>
</feature>
<reference key="1">
    <citation type="submission" date="2004-11" db="EMBL/GenBank/DDBJ databases">
        <authorList>
            <consortium name="The German cDNA consortium"/>
        </authorList>
    </citation>
    <scope>NUCLEOTIDE SEQUENCE [LARGE SCALE MRNA]</scope>
    <source>
        <tissue>Kidney</tissue>
    </source>
</reference>
<accession>Q5R792</accession>
<organism>
    <name type="scientific">Pongo abelii</name>
    <name type="common">Sumatran orangutan</name>
    <name type="synonym">Pongo pygmaeus abelii</name>
    <dbReference type="NCBI Taxonomy" id="9601"/>
    <lineage>
        <taxon>Eukaryota</taxon>
        <taxon>Metazoa</taxon>
        <taxon>Chordata</taxon>
        <taxon>Craniata</taxon>
        <taxon>Vertebrata</taxon>
        <taxon>Euteleostomi</taxon>
        <taxon>Mammalia</taxon>
        <taxon>Eutheria</taxon>
        <taxon>Euarchontoglires</taxon>
        <taxon>Primates</taxon>
        <taxon>Haplorrhini</taxon>
        <taxon>Catarrhini</taxon>
        <taxon>Hominidae</taxon>
        <taxon>Pongo</taxon>
    </lineage>
</organism>
<evidence type="ECO:0000250" key="1"/>
<evidence type="ECO:0000250" key="2">
    <source>
        <dbReference type="UniProtKB" id="Q99J83"/>
    </source>
</evidence>
<evidence type="ECO:0000250" key="3">
    <source>
        <dbReference type="UniProtKB" id="Q9H1Y0"/>
    </source>
</evidence>
<evidence type="ECO:0000305" key="4"/>
<dbReference type="EMBL" id="CR860226">
    <property type="protein sequence ID" value="CAH92368.1"/>
    <property type="molecule type" value="mRNA"/>
</dbReference>
<dbReference type="RefSeq" id="NP_001126394.1">
    <property type="nucleotide sequence ID" value="NM_001132922.1"/>
</dbReference>
<dbReference type="SMR" id="Q5R792"/>
<dbReference type="FunCoup" id="Q5R792">
    <property type="interactions" value="2336"/>
</dbReference>
<dbReference type="STRING" id="9601.ENSPPYP00000018899"/>
<dbReference type="Ensembl" id="ENSPPYT00000019645.3">
    <property type="protein sequence ID" value="ENSPPYP00000018899.2"/>
    <property type="gene ID" value="ENSPPYG00000016880.3"/>
</dbReference>
<dbReference type="GeneID" id="100173376"/>
<dbReference type="KEGG" id="pon:100173376"/>
<dbReference type="CTD" id="9474"/>
<dbReference type="eggNOG" id="KOG2976">
    <property type="taxonomic scope" value="Eukaryota"/>
</dbReference>
<dbReference type="GeneTree" id="ENSGT00390000004766"/>
<dbReference type="HOGENOM" id="CLU_051894_1_0_1"/>
<dbReference type="InParanoid" id="Q5R792"/>
<dbReference type="OMA" id="SIQKAVW"/>
<dbReference type="OrthoDB" id="272162at2759"/>
<dbReference type="TreeFam" id="TF314415"/>
<dbReference type="Proteomes" id="UP000001595">
    <property type="component" value="Chromosome 6"/>
</dbReference>
<dbReference type="GO" id="GO:0034274">
    <property type="term" value="C:Atg12-Atg5-Atg16 complex"/>
    <property type="evidence" value="ECO:0007669"/>
    <property type="project" value="Ensembl"/>
</dbReference>
<dbReference type="GO" id="GO:0005776">
    <property type="term" value="C:autophagosome"/>
    <property type="evidence" value="ECO:0007669"/>
    <property type="project" value="Ensembl"/>
</dbReference>
<dbReference type="GO" id="GO:0030424">
    <property type="term" value="C:axon"/>
    <property type="evidence" value="ECO:0007669"/>
    <property type="project" value="GOC"/>
</dbReference>
<dbReference type="GO" id="GO:0005930">
    <property type="term" value="C:axoneme"/>
    <property type="evidence" value="ECO:0007669"/>
    <property type="project" value="Ensembl"/>
</dbReference>
<dbReference type="GO" id="GO:0098978">
    <property type="term" value="C:glutamatergic synapse"/>
    <property type="evidence" value="ECO:0007669"/>
    <property type="project" value="Ensembl"/>
</dbReference>
<dbReference type="GO" id="GO:0044233">
    <property type="term" value="C:mitochondria-associated endoplasmic reticulum membrane contact site"/>
    <property type="evidence" value="ECO:0007669"/>
    <property type="project" value="Ensembl"/>
</dbReference>
<dbReference type="GO" id="GO:0061908">
    <property type="term" value="C:phagophore"/>
    <property type="evidence" value="ECO:0007669"/>
    <property type="project" value="TreeGrafter"/>
</dbReference>
<dbReference type="GO" id="GO:0034045">
    <property type="term" value="C:phagophore assembly site membrane"/>
    <property type="evidence" value="ECO:0000250"/>
    <property type="project" value="UniProtKB"/>
</dbReference>
<dbReference type="GO" id="GO:0098794">
    <property type="term" value="C:postsynapse"/>
    <property type="evidence" value="ECO:0007669"/>
    <property type="project" value="GOC"/>
</dbReference>
<dbReference type="GO" id="GO:0098685">
    <property type="term" value="C:Schaffer collateral - CA1 synapse"/>
    <property type="evidence" value="ECO:0007669"/>
    <property type="project" value="Ensembl"/>
</dbReference>
<dbReference type="GO" id="GO:0019776">
    <property type="term" value="F:Atg8-family ligase activity"/>
    <property type="evidence" value="ECO:0007669"/>
    <property type="project" value="Ensembl"/>
</dbReference>
<dbReference type="GO" id="GO:0035973">
    <property type="term" value="P:aggrephagy"/>
    <property type="evidence" value="ECO:0007669"/>
    <property type="project" value="Ensembl"/>
</dbReference>
<dbReference type="GO" id="GO:0019883">
    <property type="term" value="P:antigen processing and presentation of endogenous antigen"/>
    <property type="evidence" value="ECO:0007669"/>
    <property type="project" value="Ensembl"/>
</dbReference>
<dbReference type="GO" id="GO:0000045">
    <property type="term" value="P:autophagosome assembly"/>
    <property type="evidence" value="ECO:0007669"/>
    <property type="project" value="Ensembl"/>
</dbReference>
<dbReference type="GO" id="GO:0006914">
    <property type="term" value="P:autophagy"/>
    <property type="evidence" value="ECO:0000250"/>
    <property type="project" value="UniProtKB"/>
</dbReference>
<dbReference type="GO" id="GO:0000422">
    <property type="term" value="P:autophagy of mitochondrion"/>
    <property type="evidence" value="ECO:0007669"/>
    <property type="project" value="TreeGrafter"/>
</dbReference>
<dbReference type="GO" id="GO:0098930">
    <property type="term" value="P:axonal transport"/>
    <property type="evidence" value="ECO:0007669"/>
    <property type="project" value="Ensembl"/>
</dbReference>
<dbReference type="GO" id="GO:0001974">
    <property type="term" value="P:blood vessel remodeling"/>
    <property type="evidence" value="ECO:0007669"/>
    <property type="project" value="Ensembl"/>
</dbReference>
<dbReference type="GO" id="GO:0010659">
    <property type="term" value="P:cardiac muscle cell apoptotic process"/>
    <property type="evidence" value="ECO:0007669"/>
    <property type="project" value="Ensembl"/>
</dbReference>
<dbReference type="GO" id="GO:0006995">
    <property type="term" value="P:cellular response to nitrogen starvation"/>
    <property type="evidence" value="ECO:0007669"/>
    <property type="project" value="TreeGrafter"/>
</dbReference>
<dbReference type="GO" id="GO:0071500">
    <property type="term" value="P:cellular response to nitrosative stress"/>
    <property type="evidence" value="ECO:0007669"/>
    <property type="project" value="Ensembl"/>
</dbReference>
<dbReference type="GO" id="GO:0006325">
    <property type="term" value="P:chromatin organization"/>
    <property type="evidence" value="ECO:0007669"/>
    <property type="project" value="Ensembl"/>
</dbReference>
<dbReference type="GO" id="GO:0051607">
    <property type="term" value="P:defense response to virus"/>
    <property type="evidence" value="ECO:0007669"/>
    <property type="project" value="Ensembl"/>
</dbReference>
<dbReference type="GO" id="GO:0060047">
    <property type="term" value="P:heart contraction"/>
    <property type="evidence" value="ECO:0007669"/>
    <property type="project" value="Ensembl"/>
</dbReference>
<dbReference type="GO" id="GO:0045087">
    <property type="term" value="P:innate immune response"/>
    <property type="evidence" value="ECO:0007669"/>
    <property type="project" value="Ensembl"/>
</dbReference>
<dbReference type="GO" id="GO:0070254">
    <property type="term" value="P:mucus secretion"/>
    <property type="evidence" value="ECO:0007669"/>
    <property type="project" value="Ensembl"/>
</dbReference>
<dbReference type="GO" id="GO:1904093">
    <property type="term" value="P:negative regulation of autophagic cell death"/>
    <property type="evidence" value="ECO:0007669"/>
    <property type="project" value="Ensembl"/>
</dbReference>
<dbReference type="GO" id="GO:0010667">
    <property type="term" value="P:negative regulation of cardiac muscle cell apoptotic process"/>
    <property type="evidence" value="ECO:0007669"/>
    <property type="project" value="Ensembl"/>
</dbReference>
<dbReference type="GO" id="GO:0050687">
    <property type="term" value="P:negative regulation of defense response to virus"/>
    <property type="evidence" value="ECO:0007669"/>
    <property type="project" value="Ensembl"/>
</dbReference>
<dbReference type="GO" id="GO:0045824">
    <property type="term" value="P:negative regulation of innate immune response"/>
    <property type="evidence" value="ECO:0007669"/>
    <property type="project" value="Ensembl"/>
</dbReference>
<dbReference type="GO" id="GO:0050765">
    <property type="term" value="P:negative regulation of phagocytosis"/>
    <property type="evidence" value="ECO:0007669"/>
    <property type="project" value="Ensembl"/>
</dbReference>
<dbReference type="GO" id="GO:0031397">
    <property type="term" value="P:negative regulation of protein ubiquitination"/>
    <property type="evidence" value="ECO:0007669"/>
    <property type="project" value="Ensembl"/>
</dbReference>
<dbReference type="GO" id="GO:0032480">
    <property type="term" value="P:negative regulation of type I interferon production"/>
    <property type="evidence" value="ECO:0007669"/>
    <property type="project" value="Ensembl"/>
</dbReference>
<dbReference type="GO" id="GO:0039689">
    <property type="term" value="P:negative stranded viral RNA replication"/>
    <property type="evidence" value="ECO:0007669"/>
    <property type="project" value="Ensembl"/>
</dbReference>
<dbReference type="GO" id="GO:0045060">
    <property type="term" value="P:negative thymic T cell selection"/>
    <property type="evidence" value="ECO:0007669"/>
    <property type="project" value="Ensembl"/>
</dbReference>
<dbReference type="GO" id="GO:0048840">
    <property type="term" value="P:otolith development"/>
    <property type="evidence" value="ECO:0007669"/>
    <property type="project" value="Ensembl"/>
</dbReference>
<dbReference type="GO" id="GO:0034727">
    <property type="term" value="P:piecemeal microautophagy of the nucleus"/>
    <property type="evidence" value="ECO:0007669"/>
    <property type="project" value="TreeGrafter"/>
</dbReference>
<dbReference type="GO" id="GO:0070257">
    <property type="term" value="P:positive regulation of mucus secretion"/>
    <property type="evidence" value="ECO:0007669"/>
    <property type="project" value="Ensembl"/>
</dbReference>
<dbReference type="GO" id="GO:1904973">
    <property type="term" value="P:positive regulation of viral translation"/>
    <property type="evidence" value="ECO:0007669"/>
    <property type="project" value="Ensembl"/>
</dbReference>
<dbReference type="GO" id="GO:0099170">
    <property type="term" value="P:postsynaptic modulation of chemical synaptic transmission"/>
    <property type="evidence" value="ECO:0007669"/>
    <property type="project" value="Ensembl"/>
</dbReference>
<dbReference type="GO" id="GO:0016567">
    <property type="term" value="P:protein ubiquitination"/>
    <property type="evidence" value="ECO:0007669"/>
    <property type="project" value="Ensembl"/>
</dbReference>
<dbReference type="GO" id="GO:1901096">
    <property type="term" value="P:regulation of autophagosome maturation"/>
    <property type="evidence" value="ECO:0007669"/>
    <property type="project" value="Ensembl"/>
</dbReference>
<dbReference type="GO" id="GO:1902017">
    <property type="term" value="P:regulation of cilium assembly"/>
    <property type="evidence" value="ECO:0007669"/>
    <property type="project" value="Ensembl"/>
</dbReference>
<dbReference type="GO" id="GO:0002718">
    <property type="term" value="P:regulation of cytokine production involved in immune response"/>
    <property type="evidence" value="ECO:0007669"/>
    <property type="project" value="Ensembl"/>
</dbReference>
<dbReference type="GO" id="GO:0099072">
    <property type="term" value="P:regulation of postsynaptic membrane neurotransmitter receptor levels"/>
    <property type="evidence" value="ECO:0007669"/>
    <property type="project" value="Ensembl"/>
</dbReference>
<dbReference type="GO" id="GO:2000377">
    <property type="term" value="P:regulation of reactive oxygen species metabolic process"/>
    <property type="evidence" value="ECO:0007669"/>
    <property type="project" value="Ensembl"/>
</dbReference>
<dbReference type="GO" id="GO:0051279">
    <property type="term" value="P:regulation of release of sequestered calcium ion into cytosol"/>
    <property type="evidence" value="ECO:0007669"/>
    <property type="project" value="Ensembl"/>
</dbReference>
<dbReference type="GO" id="GO:0009620">
    <property type="term" value="P:response to fungus"/>
    <property type="evidence" value="ECO:0007669"/>
    <property type="project" value="Ensembl"/>
</dbReference>
<dbReference type="GO" id="GO:0009410">
    <property type="term" value="P:response to xenobiotic stimulus"/>
    <property type="evidence" value="ECO:0007669"/>
    <property type="project" value="Ensembl"/>
</dbReference>
<dbReference type="GO" id="GO:0042311">
    <property type="term" value="P:vasodilation"/>
    <property type="evidence" value="ECO:0007669"/>
    <property type="project" value="Ensembl"/>
</dbReference>
<dbReference type="GO" id="GO:0055015">
    <property type="term" value="P:ventricular cardiac muscle cell development"/>
    <property type="evidence" value="ECO:0007669"/>
    <property type="project" value="Ensembl"/>
</dbReference>
<dbReference type="FunFam" id="1.10.246.190:FF:000001">
    <property type="entry name" value="Autophagy related 5"/>
    <property type="match status" value="1"/>
</dbReference>
<dbReference type="FunFam" id="3.10.20.620:FF:000001">
    <property type="entry name" value="Autophagy related 5"/>
    <property type="match status" value="1"/>
</dbReference>
<dbReference type="FunFam" id="3.10.20.90:FF:000100">
    <property type="entry name" value="Autophagy related 5"/>
    <property type="match status" value="1"/>
</dbReference>
<dbReference type="Gene3D" id="3.10.20.620">
    <property type="match status" value="1"/>
</dbReference>
<dbReference type="Gene3D" id="1.10.246.190">
    <property type="entry name" value="Autophagy protein Apg5, helix rich domain"/>
    <property type="match status" value="1"/>
</dbReference>
<dbReference type="Gene3D" id="3.10.20.90">
    <property type="entry name" value="Phosphatidylinositol 3-kinase Catalytic Subunit, Chain A, domain 1"/>
    <property type="match status" value="1"/>
</dbReference>
<dbReference type="InterPro" id="IPR007239">
    <property type="entry name" value="Atg5"/>
</dbReference>
<dbReference type="InterPro" id="IPR048940">
    <property type="entry name" value="ATG5_HBR"/>
</dbReference>
<dbReference type="InterPro" id="IPR042526">
    <property type="entry name" value="Atg5_HR"/>
</dbReference>
<dbReference type="InterPro" id="IPR048939">
    <property type="entry name" value="ATG5_UblA"/>
</dbReference>
<dbReference type="InterPro" id="IPR042527">
    <property type="entry name" value="Atg5_UblA_dom_sf"/>
</dbReference>
<dbReference type="InterPro" id="IPR048318">
    <property type="entry name" value="ATG5_UblB"/>
</dbReference>
<dbReference type="PANTHER" id="PTHR13040">
    <property type="entry name" value="AUTOPHAGY PROTEIN 5"/>
    <property type="match status" value="1"/>
</dbReference>
<dbReference type="PANTHER" id="PTHR13040:SF2">
    <property type="entry name" value="AUTOPHAGY PROTEIN 5"/>
    <property type="match status" value="1"/>
</dbReference>
<dbReference type="Pfam" id="PF20637">
    <property type="entry name" value="ATG5_HBR"/>
    <property type="match status" value="1"/>
</dbReference>
<dbReference type="Pfam" id="PF20638">
    <property type="entry name" value="ATG5_UblA"/>
    <property type="match status" value="1"/>
</dbReference>
<dbReference type="Pfam" id="PF04106">
    <property type="entry name" value="ATG5_UblB"/>
    <property type="match status" value="1"/>
</dbReference>